<proteinExistence type="inferred from homology"/>
<evidence type="ECO:0000255" key="1">
    <source>
        <dbReference type="HAMAP-Rule" id="MF_00643"/>
    </source>
</evidence>
<evidence type="ECO:0000305" key="2"/>
<organism>
    <name type="scientific">Prochlorococcus marinus (strain MIT 9313)</name>
    <dbReference type="NCBI Taxonomy" id="74547"/>
    <lineage>
        <taxon>Bacteria</taxon>
        <taxon>Bacillati</taxon>
        <taxon>Cyanobacteriota</taxon>
        <taxon>Cyanophyceae</taxon>
        <taxon>Synechococcales</taxon>
        <taxon>Prochlorococcaceae</taxon>
        <taxon>Prochlorococcus</taxon>
    </lineage>
</organism>
<sequence length="49" mass="5441">MAQSSSAPLQALNVRVYPIFTVRWLAVHVLGVPTVFFLGAITAMQLIRR</sequence>
<dbReference type="EMBL" id="BX548175">
    <property type="protein sequence ID" value="CAE22072.1"/>
    <property type="molecule type" value="Genomic_DNA"/>
</dbReference>
<dbReference type="RefSeq" id="WP_011131263.1">
    <property type="nucleotide sequence ID" value="NC_005071.1"/>
</dbReference>
<dbReference type="KEGG" id="pmt:PMT_1897"/>
<dbReference type="eggNOG" id="ENOG50332KX">
    <property type="taxonomic scope" value="Bacteria"/>
</dbReference>
<dbReference type="HOGENOM" id="CLU_211753_1_0_3"/>
<dbReference type="OrthoDB" id="532613at2"/>
<dbReference type="Proteomes" id="UP000001423">
    <property type="component" value="Chromosome"/>
</dbReference>
<dbReference type="GO" id="GO:0009539">
    <property type="term" value="C:photosystem II reaction center"/>
    <property type="evidence" value="ECO:0007669"/>
    <property type="project" value="InterPro"/>
</dbReference>
<dbReference type="GO" id="GO:0031676">
    <property type="term" value="C:plasma membrane-derived thylakoid membrane"/>
    <property type="evidence" value="ECO:0007669"/>
    <property type="project" value="UniProtKB-SubCell"/>
</dbReference>
<dbReference type="GO" id="GO:0009055">
    <property type="term" value="F:electron transfer activity"/>
    <property type="evidence" value="ECO:0007669"/>
    <property type="project" value="UniProtKB-UniRule"/>
</dbReference>
<dbReference type="GO" id="GO:0020037">
    <property type="term" value="F:heme binding"/>
    <property type="evidence" value="ECO:0007669"/>
    <property type="project" value="InterPro"/>
</dbReference>
<dbReference type="GO" id="GO:0005506">
    <property type="term" value="F:iron ion binding"/>
    <property type="evidence" value="ECO:0007669"/>
    <property type="project" value="UniProtKB-UniRule"/>
</dbReference>
<dbReference type="GO" id="GO:0009767">
    <property type="term" value="P:photosynthetic electron transport chain"/>
    <property type="evidence" value="ECO:0007669"/>
    <property type="project" value="InterPro"/>
</dbReference>
<dbReference type="HAMAP" id="MF_00643">
    <property type="entry name" value="PSII_PsbF"/>
    <property type="match status" value="1"/>
</dbReference>
<dbReference type="InterPro" id="IPR006241">
    <property type="entry name" value="PSII_cyt_b559_bsu"/>
</dbReference>
<dbReference type="InterPro" id="IPR006216">
    <property type="entry name" value="PSII_cyt_b559_CS"/>
</dbReference>
<dbReference type="InterPro" id="IPR013081">
    <property type="entry name" value="PSII_cyt_b559_N"/>
</dbReference>
<dbReference type="NCBIfam" id="TIGR01333">
    <property type="entry name" value="cyt_b559_beta"/>
    <property type="match status" value="1"/>
</dbReference>
<dbReference type="Pfam" id="PF00283">
    <property type="entry name" value="Cytochrom_B559"/>
    <property type="match status" value="1"/>
</dbReference>
<dbReference type="PIRSF" id="PIRSF000037">
    <property type="entry name" value="PsbF"/>
    <property type="match status" value="1"/>
</dbReference>
<dbReference type="SUPFAM" id="SSF161045">
    <property type="entry name" value="Cytochrome b559 subunits"/>
    <property type="match status" value="1"/>
</dbReference>
<dbReference type="PROSITE" id="PS00537">
    <property type="entry name" value="CYTOCHROME_B559"/>
    <property type="match status" value="1"/>
</dbReference>
<gene>
    <name evidence="1" type="primary">psbF</name>
    <name type="ordered locus">PMT_1897</name>
</gene>
<name>PSBF_PROMM</name>
<keyword id="KW-0249">Electron transport</keyword>
<keyword id="KW-0349">Heme</keyword>
<keyword id="KW-0408">Iron</keyword>
<keyword id="KW-0472">Membrane</keyword>
<keyword id="KW-0479">Metal-binding</keyword>
<keyword id="KW-0602">Photosynthesis</keyword>
<keyword id="KW-0604">Photosystem II</keyword>
<keyword id="KW-1185">Reference proteome</keyword>
<keyword id="KW-0793">Thylakoid</keyword>
<keyword id="KW-0812">Transmembrane</keyword>
<keyword id="KW-1133">Transmembrane helix</keyword>
<keyword id="KW-0813">Transport</keyword>
<protein>
    <recommendedName>
        <fullName evidence="1">Cytochrome b559 subunit beta</fullName>
    </recommendedName>
    <alternativeName>
        <fullName evidence="1">PSII reaction center subunit VI</fullName>
    </alternativeName>
</protein>
<reference key="1">
    <citation type="journal article" date="2003" name="Nature">
        <title>Genome divergence in two Prochlorococcus ecotypes reflects oceanic niche differentiation.</title>
        <authorList>
            <person name="Rocap G."/>
            <person name="Larimer F.W."/>
            <person name="Lamerdin J.E."/>
            <person name="Malfatti S."/>
            <person name="Chain P."/>
            <person name="Ahlgren N.A."/>
            <person name="Arellano A."/>
            <person name="Coleman M."/>
            <person name="Hauser L."/>
            <person name="Hess W.R."/>
            <person name="Johnson Z.I."/>
            <person name="Land M.L."/>
            <person name="Lindell D."/>
            <person name="Post A.F."/>
            <person name="Regala W."/>
            <person name="Shah M."/>
            <person name="Shaw S.L."/>
            <person name="Steglich C."/>
            <person name="Sullivan M.B."/>
            <person name="Ting C.S."/>
            <person name="Tolonen A."/>
            <person name="Webb E.A."/>
            <person name="Zinser E.R."/>
            <person name="Chisholm S.W."/>
        </authorList>
    </citation>
    <scope>NUCLEOTIDE SEQUENCE [LARGE SCALE GENOMIC DNA]</scope>
    <source>
        <strain>MIT 9313</strain>
    </source>
</reference>
<feature type="chain" id="PRO_0000200470" description="Cytochrome b559 subunit beta">
    <location>
        <begin position="1"/>
        <end position="49"/>
    </location>
</feature>
<feature type="transmembrane region" description="Helical" evidence="1">
    <location>
        <begin position="24"/>
        <end position="40"/>
    </location>
</feature>
<feature type="binding site" description="axial binding residue" evidence="1">
    <location>
        <position position="28"/>
    </location>
    <ligand>
        <name>heme</name>
        <dbReference type="ChEBI" id="CHEBI:30413"/>
        <note>ligand shared with alpha subunit</note>
    </ligand>
    <ligandPart>
        <name>Fe</name>
        <dbReference type="ChEBI" id="CHEBI:18248"/>
    </ligandPart>
</feature>
<accession>Q7V4Q1</accession>
<comment type="function">
    <text evidence="1">This b-type cytochrome is tightly associated with the reaction center of photosystem II (PSII). PSII is a light-driven water:plastoquinone oxidoreductase that uses light energy to abstract electrons from H(2)O, generating O(2) and a proton gradient subsequently used for ATP formation. It consists of a core antenna complex that captures photons, and an electron transfer chain that converts photonic excitation into a charge separation.</text>
</comment>
<comment type="cofactor">
    <cofactor evidence="1">
        <name>heme b</name>
        <dbReference type="ChEBI" id="CHEBI:60344"/>
    </cofactor>
    <text evidence="1">With its partner (PsbE) binds heme. PSII binds additional chlorophylls, carotenoids and specific lipids.</text>
</comment>
<comment type="subunit">
    <text evidence="2">Heterodimer of an alpha subunit and a beta subunit. PSII is composed of 1 copy each of membrane proteins PsbA, PsbB, PsbC, PsbD, PsbE, PsbF, PsbH, PsbI, PsbJ, PsbK, PsbL, PsbM, PsbT, PsbX, PsbY, Psb30/Ycf12, peripheral proteins PsbO, CyanoQ (PsbQ), PsbU, PsbV and a large number of cofactors. It forms dimeric complexes.</text>
</comment>
<comment type="subcellular location">
    <subcellularLocation>
        <location evidence="1">Cellular thylakoid membrane</location>
        <topology evidence="1">Single-pass membrane protein</topology>
    </subcellularLocation>
</comment>
<comment type="similarity">
    <text evidence="1">Belongs to the PsbE/PsbF family.</text>
</comment>